<name>O1634_CONMR</name>
<sequence>MKLTCVIVAVLFLTAWTFVMADDPRDGPDTAVRGGKRFWKARNEMNSAASKLNKRECLEADYYCVLPFVGNGMCCSGICVFVCIAQKY</sequence>
<evidence type="ECO:0000250" key="1"/>
<evidence type="ECO:0000255" key="2"/>
<evidence type="ECO:0000305" key="3"/>
<reference key="1">
    <citation type="journal article" date="2006" name="Peptides">
        <title>Sequence diversity of O-superfamily conopeptides from Conus marmoreus native to Hainan.</title>
        <authorList>
            <person name="Luo S."/>
            <person name="Zhangsun D."/>
            <person name="Lin Q."/>
            <person name="Xie L."/>
            <person name="Wu Y."/>
            <person name="Zhu X."/>
        </authorList>
    </citation>
    <scope>NUCLEOTIDE SEQUENCE [MRNA]</scope>
    <source>
        <tissue>Venom duct</tissue>
    </source>
</reference>
<accession>Q3YEF1</accession>
<proteinExistence type="evidence at transcript level"/>
<keyword id="KW-0165">Cleavage on pair of basic residues</keyword>
<keyword id="KW-1015">Disulfide bond</keyword>
<keyword id="KW-0960">Knottin</keyword>
<keyword id="KW-0528">Neurotoxin</keyword>
<keyword id="KW-0964">Secreted</keyword>
<keyword id="KW-0732">Signal</keyword>
<keyword id="KW-0800">Toxin</keyword>
<protein>
    <recommendedName>
        <fullName>Conotoxin MaIr34</fullName>
    </recommendedName>
</protein>
<comment type="subcellular location">
    <subcellularLocation>
        <location evidence="1">Secreted</location>
    </subcellularLocation>
</comment>
<comment type="tissue specificity">
    <text>Expressed by the venom duct.</text>
</comment>
<comment type="domain">
    <text evidence="1">The presence of a 'disulfide through disulfide knot' structurally defines this protein as a knottin.</text>
</comment>
<comment type="domain">
    <text>The cysteine framework is VI/VII (C-C-CC-C-C).</text>
</comment>
<comment type="similarity">
    <text evidence="3">Belongs to the conotoxin O1 superfamily.</text>
</comment>
<organism>
    <name type="scientific">Conus marmoreus</name>
    <name type="common">Marble cone</name>
    <dbReference type="NCBI Taxonomy" id="42752"/>
    <lineage>
        <taxon>Eukaryota</taxon>
        <taxon>Metazoa</taxon>
        <taxon>Spiralia</taxon>
        <taxon>Lophotrochozoa</taxon>
        <taxon>Mollusca</taxon>
        <taxon>Gastropoda</taxon>
        <taxon>Caenogastropoda</taxon>
        <taxon>Neogastropoda</taxon>
        <taxon>Conoidea</taxon>
        <taxon>Conidae</taxon>
        <taxon>Conus</taxon>
    </lineage>
</organism>
<dbReference type="EMBL" id="DQ141162">
    <property type="protein sequence ID" value="AAZ83763.1"/>
    <property type="molecule type" value="mRNA"/>
</dbReference>
<dbReference type="SMR" id="Q3YEF1"/>
<dbReference type="ConoServer" id="1119">
    <property type="toxin name" value="MaIr34 precursor"/>
</dbReference>
<dbReference type="GO" id="GO:0005576">
    <property type="term" value="C:extracellular region"/>
    <property type="evidence" value="ECO:0007669"/>
    <property type="project" value="UniProtKB-SubCell"/>
</dbReference>
<dbReference type="GO" id="GO:0008200">
    <property type="term" value="F:ion channel inhibitor activity"/>
    <property type="evidence" value="ECO:0007669"/>
    <property type="project" value="InterPro"/>
</dbReference>
<dbReference type="GO" id="GO:0090729">
    <property type="term" value="F:toxin activity"/>
    <property type="evidence" value="ECO:0007669"/>
    <property type="project" value="UniProtKB-KW"/>
</dbReference>
<dbReference type="InterPro" id="IPR004214">
    <property type="entry name" value="Conotoxin"/>
</dbReference>
<dbReference type="Pfam" id="PF02950">
    <property type="entry name" value="Conotoxin"/>
    <property type="match status" value="1"/>
</dbReference>
<dbReference type="SUPFAM" id="SSF57059">
    <property type="entry name" value="omega toxin-like"/>
    <property type="match status" value="1"/>
</dbReference>
<feature type="signal peptide" evidence="2">
    <location>
        <begin position="1"/>
        <end position="21"/>
    </location>
</feature>
<feature type="propeptide" id="PRO_0000315508" evidence="3">
    <location>
        <begin position="22"/>
        <end position="53"/>
    </location>
</feature>
<feature type="peptide" id="PRO_0000315509" description="Conotoxin MaIr34">
    <location>
        <begin position="56"/>
        <end position="88"/>
    </location>
</feature>
<feature type="disulfide bond" evidence="1">
    <location>
        <begin position="57"/>
        <end position="75"/>
    </location>
</feature>
<feature type="disulfide bond" evidence="1">
    <location>
        <begin position="64"/>
        <end position="79"/>
    </location>
</feature>
<feature type="disulfide bond" evidence="1">
    <location>
        <begin position="74"/>
        <end position="83"/>
    </location>
</feature>